<feature type="chain" id="PRO_0000122062" description="Serine--tRNA ligase">
    <location>
        <begin position="1"/>
        <end position="435"/>
    </location>
</feature>
<feature type="binding site" evidence="1">
    <location>
        <begin position="237"/>
        <end position="239"/>
    </location>
    <ligand>
        <name>L-serine</name>
        <dbReference type="ChEBI" id="CHEBI:33384"/>
    </ligand>
</feature>
<feature type="binding site" evidence="1">
    <location>
        <begin position="268"/>
        <end position="270"/>
    </location>
    <ligand>
        <name>ATP</name>
        <dbReference type="ChEBI" id="CHEBI:30616"/>
    </ligand>
</feature>
<feature type="binding site" evidence="1">
    <location>
        <position position="291"/>
    </location>
    <ligand>
        <name>L-serine</name>
        <dbReference type="ChEBI" id="CHEBI:33384"/>
    </ligand>
</feature>
<feature type="binding site" evidence="1">
    <location>
        <begin position="355"/>
        <end position="358"/>
    </location>
    <ligand>
        <name>ATP</name>
        <dbReference type="ChEBI" id="CHEBI:30616"/>
    </ligand>
</feature>
<feature type="binding site" evidence="1">
    <location>
        <position position="390"/>
    </location>
    <ligand>
        <name>L-serine</name>
        <dbReference type="ChEBI" id="CHEBI:33384"/>
    </ligand>
</feature>
<keyword id="KW-0030">Aminoacyl-tRNA synthetase</keyword>
<keyword id="KW-0067">ATP-binding</keyword>
<keyword id="KW-0963">Cytoplasm</keyword>
<keyword id="KW-0436">Ligase</keyword>
<keyword id="KW-0547">Nucleotide-binding</keyword>
<keyword id="KW-0648">Protein biosynthesis</keyword>
<keyword id="KW-1185">Reference proteome</keyword>
<reference key="1">
    <citation type="journal article" date="2005" name="Proc. Natl. Acad. Sci. U.S.A.">
        <title>Complete genome sequence of the probiotic lactic acid bacterium Lactobacillus acidophilus NCFM.</title>
        <authorList>
            <person name="Altermann E."/>
            <person name="Russell W.M."/>
            <person name="Azcarate-Peril M.A."/>
            <person name="Barrangou R."/>
            <person name="Buck B.L."/>
            <person name="McAuliffe O."/>
            <person name="Souther N."/>
            <person name="Dobson A."/>
            <person name="Duong T."/>
            <person name="Callanan M."/>
            <person name="Lick S."/>
            <person name="Hamrick A."/>
            <person name="Cano R."/>
            <person name="Klaenhammer T.R."/>
        </authorList>
    </citation>
    <scope>NUCLEOTIDE SEQUENCE [LARGE SCALE GENOMIC DNA]</scope>
    <source>
        <strain>ATCC 700396 / NCK56 / N2 / NCFM</strain>
    </source>
</reference>
<gene>
    <name evidence="1" type="primary">serS</name>
    <name type="ordered locus">LBA1626</name>
</gene>
<dbReference type="EC" id="6.1.1.11" evidence="1"/>
<dbReference type="EMBL" id="CP000033">
    <property type="protein sequence ID" value="AAV43439.1"/>
    <property type="molecule type" value="Genomic_DNA"/>
</dbReference>
<dbReference type="RefSeq" id="WP_011254519.1">
    <property type="nucleotide sequence ID" value="NC_006814.3"/>
</dbReference>
<dbReference type="RefSeq" id="YP_194470.1">
    <property type="nucleotide sequence ID" value="NC_006814.3"/>
</dbReference>
<dbReference type="SMR" id="Q5FIN5"/>
<dbReference type="STRING" id="272621.LBA1626"/>
<dbReference type="GeneID" id="93289306"/>
<dbReference type="KEGG" id="lac:LBA1626"/>
<dbReference type="PATRIC" id="fig|272621.13.peg.1546"/>
<dbReference type="eggNOG" id="COG0172">
    <property type="taxonomic scope" value="Bacteria"/>
</dbReference>
<dbReference type="HOGENOM" id="CLU_023797_0_1_9"/>
<dbReference type="OrthoDB" id="9804647at2"/>
<dbReference type="BioCyc" id="LACI272621:G1G49-1595-MONOMER"/>
<dbReference type="UniPathway" id="UPA00906">
    <property type="reaction ID" value="UER00895"/>
</dbReference>
<dbReference type="Proteomes" id="UP000006381">
    <property type="component" value="Chromosome"/>
</dbReference>
<dbReference type="GO" id="GO:0005737">
    <property type="term" value="C:cytoplasm"/>
    <property type="evidence" value="ECO:0007669"/>
    <property type="project" value="UniProtKB-SubCell"/>
</dbReference>
<dbReference type="GO" id="GO:0005524">
    <property type="term" value="F:ATP binding"/>
    <property type="evidence" value="ECO:0007669"/>
    <property type="project" value="UniProtKB-UniRule"/>
</dbReference>
<dbReference type="GO" id="GO:0140096">
    <property type="term" value="F:catalytic activity, acting on a protein"/>
    <property type="evidence" value="ECO:0007669"/>
    <property type="project" value="UniProtKB-ARBA"/>
</dbReference>
<dbReference type="GO" id="GO:0004828">
    <property type="term" value="F:serine-tRNA ligase activity"/>
    <property type="evidence" value="ECO:0007669"/>
    <property type="project" value="UniProtKB-UniRule"/>
</dbReference>
<dbReference type="GO" id="GO:0016740">
    <property type="term" value="F:transferase activity"/>
    <property type="evidence" value="ECO:0007669"/>
    <property type="project" value="UniProtKB-ARBA"/>
</dbReference>
<dbReference type="GO" id="GO:0016260">
    <property type="term" value="P:selenocysteine biosynthetic process"/>
    <property type="evidence" value="ECO:0007669"/>
    <property type="project" value="UniProtKB-UniRule"/>
</dbReference>
<dbReference type="GO" id="GO:0006434">
    <property type="term" value="P:seryl-tRNA aminoacylation"/>
    <property type="evidence" value="ECO:0007669"/>
    <property type="project" value="UniProtKB-UniRule"/>
</dbReference>
<dbReference type="CDD" id="cd00770">
    <property type="entry name" value="SerRS_core"/>
    <property type="match status" value="1"/>
</dbReference>
<dbReference type="Gene3D" id="3.30.930.10">
    <property type="entry name" value="Bira Bifunctional Protein, Domain 2"/>
    <property type="match status" value="1"/>
</dbReference>
<dbReference type="Gene3D" id="1.10.287.40">
    <property type="entry name" value="Serine-tRNA synthetase, tRNA binding domain"/>
    <property type="match status" value="1"/>
</dbReference>
<dbReference type="HAMAP" id="MF_00176">
    <property type="entry name" value="Ser_tRNA_synth_type1"/>
    <property type="match status" value="1"/>
</dbReference>
<dbReference type="InterPro" id="IPR002314">
    <property type="entry name" value="aa-tRNA-synt_IIb"/>
</dbReference>
<dbReference type="InterPro" id="IPR006195">
    <property type="entry name" value="aa-tRNA-synth_II"/>
</dbReference>
<dbReference type="InterPro" id="IPR045864">
    <property type="entry name" value="aa-tRNA-synth_II/BPL/LPL"/>
</dbReference>
<dbReference type="InterPro" id="IPR002317">
    <property type="entry name" value="Ser-tRNA-ligase_type_1"/>
</dbReference>
<dbReference type="InterPro" id="IPR015866">
    <property type="entry name" value="Ser-tRNA-synth_1_N"/>
</dbReference>
<dbReference type="InterPro" id="IPR042103">
    <property type="entry name" value="SerRS_1_N_sf"/>
</dbReference>
<dbReference type="InterPro" id="IPR033729">
    <property type="entry name" value="SerRS_core"/>
</dbReference>
<dbReference type="InterPro" id="IPR010978">
    <property type="entry name" value="tRNA-bd_arm"/>
</dbReference>
<dbReference type="NCBIfam" id="TIGR00414">
    <property type="entry name" value="serS"/>
    <property type="match status" value="1"/>
</dbReference>
<dbReference type="PANTHER" id="PTHR43697:SF1">
    <property type="entry name" value="SERINE--TRNA LIGASE"/>
    <property type="match status" value="1"/>
</dbReference>
<dbReference type="PANTHER" id="PTHR43697">
    <property type="entry name" value="SERYL-TRNA SYNTHETASE"/>
    <property type="match status" value="1"/>
</dbReference>
<dbReference type="Pfam" id="PF02403">
    <property type="entry name" value="Seryl_tRNA_N"/>
    <property type="match status" value="1"/>
</dbReference>
<dbReference type="Pfam" id="PF00587">
    <property type="entry name" value="tRNA-synt_2b"/>
    <property type="match status" value="1"/>
</dbReference>
<dbReference type="PIRSF" id="PIRSF001529">
    <property type="entry name" value="Ser-tRNA-synth_IIa"/>
    <property type="match status" value="1"/>
</dbReference>
<dbReference type="PRINTS" id="PR00981">
    <property type="entry name" value="TRNASYNTHSER"/>
</dbReference>
<dbReference type="SUPFAM" id="SSF55681">
    <property type="entry name" value="Class II aaRS and biotin synthetases"/>
    <property type="match status" value="1"/>
</dbReference>
<dbReference type="SUPFAM" id="SSF46589">
    <property type="entry name" value="tRNA-binding arm"/>
    <property type="match status" value="1"/>
</dbReference>
<dbReference type="PROSITE" id="PS50862">
    <property type="entry name" value="AA_TRNA_LIGASE_II"/>
    <property type="match status" value="1"/>
</dbReference>
<evidence type="ECO:0000255" key="1">
    <source>
        <dbReference type="HAMAP-Rule" id="MF_00176"/>
    </source>
</evidence>
<proteinExistence type="inferred from homology"/>
<accession>Q5FIN5</accession>
<organism>
    <name type="scientific">Lactobacillus acidophilus (strain ATCC 700396 / NCK56 / N2 / NCFM)</name>
    <dbReference type="NCBI Taxonomy" id="272621"/>
    <lineage>
        <taxon>Bacteria</taxon>
        <taxon>Bacillati</taxon>
        <taxon>Bacillota</taxon>
        <taxon>Bacilli</taxon>
        <taxon>Lactobacillales</taxon>
        <taxon>Lactobacillaceae</taxon>
        <taxon>Lactobacillus</taxon>
    </lineage>
</organism>
<comment type="function">
    <text evidence="1">Catalyzes the attachment of serine to tRNA(Ser). Is also able to aminoacylate tRNA(Sec) with serine, to form the misacylated tRNA L-seryl-tRNA(Sec), which will be further converted into selenocysteinyl-tRNA(Sec).</text>
</comment>
<comment type="catalytic activity">
    <reaction evidence="1">
        <text>tRNA(Ser) + L-serine + ATP = L-seryl-tRNA(Ser) + AMP + diphosphate + H(+)</text>
        <dbReference type="Rhea" id="RHEA:12292"/>
        <dbReference type="Rhea" id="RHEA-COMP:9669"/>
        <dbReference type="Rhea" id="RHEA-COMP:9703"/>
        <dbReference type="ChEBI" id="CHEBI:15378"/>
        <dbReference type="ChEBI" id="CHEBI:30616"/>
        <dbReference type="ChEBI" id="CHEBI:33019"/>
        <dbReference type="ChEBI" id="CHEBI:33384"/>
        <dbReference type="ChEBI" id="CHEBI:78442"/>
        <dbReference type="ChEBI" id="CHEBI:78533"/>
        <dbReference type="ChEBI" id="CHEBI:456215"/>
        <dbReference type="EC" id="6.1.1.11"/>
    </reaction>
</comment>
<comment type="catalytic activity">
    <reaction evidence="1">
        <text>tRNA(Sec) + L-serine + ATP = L-seryl-tRNA(Sec) + AMP + diphosphate + H(+)</text>
        <dbReference type="Rhea" id="RHEA:42580"/>
        <dbReference type="Rhea" id="RHEA-COMP:9742"/>
        <dbReference type="Rhea" id="RHEA-COMP:10128"/>
        <dbReference type="ChEBI" id="CHEBI:15378"/>
        <dbReference type="ChEBI" id="CHEBI:30616"/>
        <dbReference type="ChEBI" id="CHEBI:33019"/>
        <dbReference type="ChEBI" id="CHEBI:33384"/>
        <dbReference type="ChEBI" id="CHEBI:78442"/>
        <dbReference type="ChEBI" id="CHEBI:78533"/>
        <dbReference type="ChEBI" id="CHEBI:456215"/>
        <dbReference type="EC" id="6.1.1.11"/>
    </reaction>
</comment>
<comment type="pathway">
    <text evidence="1">Aminoacyl-tRNA biosynthesis; selenocysteinyl-tRNA(Sec) biosynthesis; L-seryl-tRNA(Sec) from L-serine and tRNA(Sec): step 1/1.</text>
</comment>
<comment type="subunit">
    <text evidence="1">Homodimer. The tRNA molecule binds across the dimer.</text>
</comment>
<comment type="subcellular location">
    <subcellularLocation>
        <location evidence="1">Cytoplasm</location>
    </subcellularLocation>
</comment>
<comment type="domain">
    <text evidence="1">Consists of two distinct domains, a catalytic core and a N-terminal extension that is involved in tRNA binding.</text>
</comment>
<comment type="similarity">
    <text evidence="1">Belongs to the class-II aminoacyl-tRNA synthetase family. Type-1 seryl-tRNA synthetase subfamily.</text>
</comment>
<sequence>MLDIKVIRENLDWSKKKLATRGIKPEELDELVEIDTKRRKDLTMSEQLKAKRNDVSKQIAEKKRNKEDASDAIAEMREVGKEIKKLDKEVDELTEKQNYILLRLPNFPADSDPIGPDDSYNEEVRKWEEPTKFDFKPKAHWDLGTDLGILDWDRASKVSGARFVYYIGAGALLERAVFNFFLDENTKDGYTEIIPPYLVNDASMQGTGQFPKFHEDVYTIVDNDDPDKPRDLTLIPTAEVPLVNYFRNEIIHENKLPINVTAMSPAFRSEAGSAGRDTRGLIRMHEFRKVEMVKICKPDESWDELEKLTHNAEHLLQKLGLPYHVVALSTGDASFTSAKTYDLEVWMPAQDKYREISSCSNCTDFQARRAQIRYRDEDGKLHLAHTLNGSGLAVGRCVAAILENYQNEDGSVTVPDVLVPYMNGMKKITKESGLI</sequence>
<protein>
    <recommendedName>
        <fullName evidence="1">Serine--tRNA ligase</fullName>
        <ecNumber evidence="1">6.1.1.11</ecNumber>
    </recommendedName>
    <alternativeName>
        <fullName evidence="1">Seryl-tRNA synthetase</fullName>
        <shortName evidence="1">SerRS</shortName>
    </alternativeName>
    <alternativeName>
        <fullName evidence="1">Seryl-tRNA(Ser/Sec) synthetase</fullName>
    </alternativeName>
</protein>
<name>SYS_LACAC</name>